<sequence>MGAKGITYKDAGVDIDAGNTFVKMIKPFVRATSRPEVISDIGGFGGLFSLNTNKYKNPVLVSGTDGVGTKLKIAMMADRHDTVGIDLVAMCVNDIVVQGAEPLFFLDYFATGSLSPERGAAVVKGISEGCIQAGCALIGGETAEMPGFYQDGEYDLAGFTVGVVDRDKIIDGSSITVGNTLIGLASSGLHSNGYSLARKIIFDTLGFGINDMLPGHDRSVADELLTPTRIYVKSVLNLLRDFRVNGIAHITGGGLLENVPRILPKGCKAIIRRDSWTMPEIFRILQNGGNMEWTEMYRTFNCGIGMVLAVPENDVDEVLIRLSGLQEKAFVIGEVAKCEAGTESVEMI</sequence>
<organism>
    <name type="scientific">Geobacter metallireducens (strain ATCC 53774 / DSM 7210 / GS-15)</name>
    <dbReference type="NCBI Taxonomy" id="269799"/>
    <lineage>
        <taxon>Bacteria</taxon>
        <taxon>Pseudomonadati</taxon>
        <taxon>Thermodesulfobacteriota</taxon>
        <taxon>Desulfuromonadia</taxon>
        <taxon>Geobacterales</taxon>
        <taxon>Geobacteraceae</taxon>
        <taxon>Geobacter</taxon>
    </lineage>
</organism>
<gene>
    <name evidence="1" type="primary">purM</name>
    <name type="ordered locus">Gmet_1844</name>
</gene>
<proteinExistence type="inferred from homology"/>
<keyword id="KW-0067">ATP-binding</keyword>
<keyword id="KW-0963">Cytoplasm</keyword>
<keyword id="KW-0436">Ligase</keyword>
<keyword id="KW-0547">Nucleotide-binding</keyword>
<keyword id="KW-0658">Purine biosynthesis</keyword>
<keyword id="KW-1185">Reference proteome</keyword>
<name>PUR5_GEOMG</name>
<comment type="catalytic activity">
    <reaction evidence="1">
        <text>2-formamido-N(1)-(5-O-phospho-beta-D-ribosyl)acetamidine + ATP = 5-amino-1-(5-phospho-beta-D-ribosyl)imidazole + ADP + phosphate + H(+)</text>
        <dbReference type="Rhea" id="RHEA:23032"/>
        <dbReference type="ChEBI" id="CHEBI:15378"/>
        <dbReference type="ChEBI" id="CHEBI:30616"/>
        <dbReference type="ChEBI" id="CHEBI:43474"/>
        <dbReference type="ChEBI" id="CHEBI:137981"/>
        <dbReference type="ChEBI" id="CHEBI:147287"/>
        <dbReference type="ChEBI" id="CHEBI:456216"/>
        <dbReference type="EC" id="6.3.3.1"/>
    </reaction>
</comment>
<comment type="pathway">
    <text evidence="1">Purine metabolism; IMP biosynthesis via de novo pathway; 5-amino-1-(5-phospho-D-ribosyl)imidazole from N(2)-formyl-N(1)-(5-phospho-D-ribosyl)glycinamide: step 2/2.</text>
</comment>
<comment type="subcellular location">
    <subcellularLocation>
        <location evidence="1">Cytoplasm</location>
    </subcellularLocation>
</comment>
<comment type="similarity">
    <text evidence="1">Belongs to the AIR synthase family.</text>
</comment>
<reference key="1">
    <citation type="journal article" date="2009" name="BMC Microbiol.">
        <title>The genome sequence of Geobacter metallireducens: features of metabolism, physiology and regulation common and dissimilar to Geobacter sulfurreducens.</title>
        <authorList>
            <person name="Aklujkar M."/>
            <person name="Krushkal J."/>
            <person name="DiBartolo G."/>
            <person name="Lapidus A."/>
            <person name="Land M.L."/>
            <person name="Lovley D.R."/>
        </authorList>
    </citation>
    <scope>NUCLEOTIDE SEQUENCE [LARGE SCALE GENOMIC DNA]</scope>
    <source>
        <strain>ATCC 53774 / DSM 7210 / GS-15</strain>
    </source>
</reference>
<feature type="chain" id="PRO_0000258357" description="Phosphoribosylformylglycinamidine cyclo-ligase">
    <location>
        <begin position="1"/>
        <end position="348"/>
    </location>
</feature>
<dbReference type="EC" id="6.3.3.1" evidence="1"/>
<dbReference type="EMBL" id="CP000148">
    <property type="protein sequence ID" value="ABB32073.1"/>
    <property type="molecule type" value="Genomic_DNA"/>
</dbReference>
<dbReference type="RefSeq" id="WP_004512002.1">
    <property type="nucleotide sequence ID" value="NC_007517.1"/>
</dbReference>
<dbReference type="SMR" id="Q39UK1"/>
<dbReference type="STRING" id="269799.Gmet_1844"/>
<dbReference type="KEGG" id="gme:Gmet_1844"/>
<dbReference type="eggNOG" id="COG0150">
    <property type="taxonomic scope" value="Bacteria"/>
</dbReference>
<dbReference type="HOGENOM" id="CLU_047116_0_0_7"/>
<dbReference type="UniPathway" id="UPA00074">
    <property type="reaction ID" value="UER00129"/>
</dbReference>
<dbReference type="Proteomes" id="UP000007073">
    <property type="component" value="Chromosome"/>
</dbReference>
<dbReference type="GO" id="GO:0005829">
    <property type="term" value="C:cytosol"/>
    <property type="evidence" value="ECO:0007669"/>
    <property type="project" value="TreeGrafter"/>
</dbReference>
<dbReference type="GO" id="GO:0005524">
    <property type="term" value="F:ATP binding"/>
    <property type="evidence" value="ECO:0007669"/>
    <property type="project" value="UniProtKB-KW"/>
</dbReference>
<dbReference type="GO" id="GO:0004637">
    <property type="term" value="F:phosphoribosylamine-glycine ligase activity"/>
    <property type="evidence" value="ECO:0007669"/>
    <property type="project" value="TreeGrafter"/>
</dbReference>
<dbReference type="GO" id="GO:0004641">
    <property type="term" value="F:phosphoribosylformylglycinamidine cyclo-ligase activity"/>
    <property type="evidence" value="ECO:0007669"/>
    <property type="project" value="UniProtKB-UniRule"/>
</dbReference>
<dbReference type="GO" id="GO:0006189">
    <property type="term" value="P:'de novo' IMP biosynthetic process"/>
    <property type="evidence" value="ECO:0007669"/>
    <property type="project" value="UniProtKB-UniRule"/>
</dbReference>
<dbReference type="GO" id="GO:0046084">
    <property type="term" value="P:adenine biosynthetic process"/>
    <property type="evidence" value="ECO:0007669"/>
    <property type="project" value="TreeGrafter"/>
</dbReference>
<dbReference type="CDD" id="cd02196">
    <property type="entry name" value="PurM"/>
    <property type="match status" value="1"/>
</dbReference>
<dbReference type="FunFam" id="3.30.1330.10:FF:000001">
    <property type="entry name" value="Phosphoribosylformylglycinamidine cyclo-ligase"/>
    <property type="match status" value="1"/>
</dbReference>
<dbReference type="FunFam" id="3.90.650.10:FF:000001">
    <property type="entry name" value="Phosphoribosylformylglycinamidine cyclo-ligase"/>
    <property type="match status" value="1"/>
</dbReference>
<dbReference type="Gene3D" id="3.90.650.10">
    <property type="entry name" value="PurM-like C-terminal domain"/>
    <property type="match status" value="1"/>
</dbReference>
<dbReference type="Gene3D" id="3.30.1330.10">
    <property type="entry name" value="PurM-like, N-terminal domain"/>
    <property type="match status" value="1"/>
</dbReference>
<dbReference type="HAMAP" id="MF_00741">
    <property type="entry name" value="AIRS"/>
    <property type="match status" value="1"/>
</dbReference>
<dbReference type="InterPro" id="IPR010918">
    <property type="entry name" value="PurM-like_C_dom"/>
</dbReference>
<dbReference type="InterPro" id="IPR036676">
    <property type="entry name" value="PurM-like_C_sf"/>
</dbReference>
<dbReference type="InterPro" id="IPR016188">
    <property type="entry name" value="PurM-like_N"/>
</dbReference>
<dbReference type="InterPro" id="IPR036921">
    <property type="entry name" value="PurM-like_N_sf"/>
</dbReference>
<dbReference type="InterPro" id="IPR004733">
    <property type="entry name" value="PurM_cligase"/>
</dbReference>
<dbReference type="NCBIfam" id="TIGR00878">
    <property type="entry name" value="purM"/>
    <property type="match status" value="1"/>
</dbReference>
<dbReference type="PANTHER" id="PTHR10520:SF12">
    <property type="entry name" value="TRIFUNCTIONAL PURINE BIOSYNTHETIC PROTEIN ADENOSINE-3"/>
    <property type="match status" value="1"/>
</dbReference>
<dbReference type="PANTHER" id="PTHR10520">
    <property type="entry name" value="TRIFUNCTIONAL PURINE BIOSYNTHETIC PROTEIN ADENOSINE-3-RELATED"/>
    <property type="match status" value="1"/>
</dbReference>
<dbReference type="Pfam" id="PF00586">
    <property type="entry name" value="AIRS"/>
    <property type="match status" value="1"/>
</dbReference>
<dbReference type="Pfam" id="PF02769">
    <property type="entry name" value="AIRS_C"/>
    <property type="match status" value="1"/>
</dbReference>
<dbReference type="SUPFAM" id="SSF56042">
    <property type="entry name" value="PurM C-terminal domain-like"/>
    <property type="match status" value="1"/>
</dbReference>
<dbReference type="SUPFAM" id="SSF55326">
    <property type="entry name" value="PurM N-terminal domain-like"/>
    <property type="match status" value="1"/>
</dbReference>
<protein>
    <recommendedName>
        <fullName evidence="1">Phosphoribosylformylglycinamidine cyclo-ligase</fullName>
        <ecNumber evidence="1">6.3.3.1</ecNumber>
    </recommendedName>
    <alternativeName>
        <fullName evidence="1">AIR synthase</fullName>
    </alternativeName>
    <alternativeName>
        <fullName evidence="1">AIRS</fullName>
    </alternativeName>
    <alternativeName>
        <fullName evidence="1">Phosphoribosyl-aminoimidazole synthetase</fullName>
    </alternativeName>
</protein>
<accession>Q39UK1</accession>
<evidence type="ECO:0000255" key="1">
    <source>
        <dbReference type="HAMAP-Rule" id="MF_00741"/>
    </source>
</evidence>